<gene>
    <name type="primary">Ttyh3</name>
    <name type="synonym">Kiaa1691</name>
</gene>
<sequence>MAGVSYAAPWWVSLLHRLPHFDLRWEATSSQFRPEDADYQQALLLLGATALACLALDLLFLLFYSFWLCCRRRKTDEHLDADCCCTAWCVIITTLVCSAGIAVGFYGNGETSDGIHRATYSLRHANRTVAGVQDRVWDTAAALNRTAEPNLQSLERQLAGRQEPLRAVQRLQTLLGTLLGYTAAIPFWRNPGVSLEVLAEQVDLYDWYRWLGYLGLLLLDVIICLLVLVGLIRSSKGILVGVCLLGVLALVISWGALGLELAVSVGSSDFCVDPDTFVTKMVEEHSVLSGDILQYYLACSPRATNPFQQKLSGSHKALVEMQDVVAELLRNVPREHPATKDPLLRVQEVLNGTEVNLQHLTALVDCRSLHLDYVQALTGFCYDGVEGLIYLALFSFVTALMFSSIVCSIPHTWQQKRGPDDDGEEETAPGPRQAHDSLYRVHMPSLYSCGSSYGSEASIPAAAHTVSNAPVTEYMSQNANFQNPRCENTPLIGRESPPPSYTSSMRAKYLATSQPRPDSSGSGH</sequence>
<comment type="function">
    <text evidence="2 7">Calcium-independent, swelling-dependent volume-regulated anion channel (VRAC-swell) which plays a pivotal role in the process of regulatory volume decrease (RVD) in the brain through the efflux of anions like chloride and organic osmolytes like glutamate (PubMed:31138989). Probable large-conductance Ca(2+)-activated chloride channel (By similarity).</text>
</comment>
<comment type="catalytic activity">
    <reaction evidence="7">
        <text>chloride(in) = chloride(out)</text>
        <dbReference type="Rhea" id="RHEA:29823"/>
        <dbReference type="ChEBI" id="CHEBI:17996"/>
    </reaction>
</comment>
<comment type="catalytic activity">
    <reaction evidence="7">
        <text>L-glutamate(out) = L-glutamate(in)</text>
        <dbReference type="Rhea" id="RHEA:66336"/>
        <dbReference type="ChEBI" id="CHEBI:29985"/>
    </reaction>
    <physiologicalReaction direction="right-to-left" evidence="13">
        <dbReference type="Rhea" id="RHEA:66338"/>
    </physiologicalReaction>
</comment>
<comment type="activity regulation">
    <text evidence="7">Inhibited by (4-[(2-butyl-6,7-dichloro-2- cyclopentyl-2,3-dihydro-1-oxo-1H-inden-5-yl)oxy]butanoic acid), genistein and PD98059 (MEK1 inhibitor).</text>
</comment>
<comment type="subunit">
    <text evidence="2 8 9">Homotetramer; disulfide-linked (PubMed:36042377). Forms cis-homodimers in the presence of Ca(2+) (PubMed:34824283). Interacts with NEDD4L (By similarity).</text>
</comment>
<comment type="subcellular location">
    <subcellularLocation>
        <location evidence="9">Cell membrane</location>
        <topology evidence="4">Multi-pass membrane protein</topology>
    </subcellularLocation>
</comment>
<comment type="alternative products">
    <event type="alternative splicing"/>
    <isoform>
        <id>Q6P5F7-1</id>
        <name>1</name>
        <sequence type="displayed"/>
    </isoform>
    <isoform>
        <id>Q6P5F7-2</id>
        <name>2</name>
        <sequence type="described" ref="VSP_029771 VSP_029772"/>
    </isoform>
</comment>
<comment type="tissue specificity">
    <text evidence="6">Expressed in excitable tissues. Expressed in the brain, heart, skeletal muscle, colon, spleen, kidney and peripheral blood leukocytes. Also expressed in fat, the pancreas, thymus, and uterus.</text>
</comment>
<comment type="PTM">
    <text evidence="2">Ubiquitinated by NEDD4L.</text>
</comment>
<comment type="PTM">
    <text evidence="9">N-glycosylated.</text>
</comment>
<comment type="similarity">
    <text evidence="12">Belongs to the tweety family.</text>
</comment>
<comment type="sequence caution" evidence="12">
    <conflict type="erroneous termination">
        <sequence resource="EMBL-CDS" id="AAH59083"/>
    </conflict>
    <text>Truncated C-terminus.</text>
</comment>
<feature type="chain" id="PRO_0000312252" description="Protein tweety homolog 3">
    <location>
        <begin position="1"/>
        <end position="524"/>
    </location>
</feature>
<feature type="topological domain" description="Extracellular" evidence="2">
    <location>
        <begin position="1"/>
        <end position="42"/>
    </location>
</feature>
<feature type="transmembrane region" description="Helical; Name=1" evidence="4">
    <location>
        <begin position="43"/>
        <end position="63"/>
    </location>
</feature>
<feature type="topological domain" description="Cytoplasmic" evidence="2">
    <location>
        <begin position="64"/>
        <end position="86"/>
    </location>
</feature>
<feature type="transmembrane region" description="Helical; Name=2" evidence="4">
    <location>
        <begin position="87"/>
        <end position="107"/>
    </location>
</feature>
<feature type="topological domain" description="Extracellular" evidence="2">
    <location>
        <begin position="108"/>
        <end position="211"/>
    </location>
</feature>
<feature type="transmembrane region" description="Helical; Name=3" evidence="4">
    <location>
        <begin position="212"/>
        <end position="232"/>
    </location>
</feature>
<feature type="topological domain" description="Cytoplasmic" evidence="2">
    <location>
        <begin position="233"/>
        <end position="236"/>
    </location>
</feature>
<feature type="transmembrane region" description="Helical; Name=4" evidence="4">
    <location>
        <begin position="237"/>
        <end position="257"/>
    </location>
</feature>
<feature type="topological domain" description="Extracellular" evidence="2">
    <location>
        <begin position="258"/>
        <end position="386"/>
    </location>
</feature>
<feature type="transmembrane region" description="Helical; Name=5" evidence="4">
    <location>
        <begin position="387"/>
        <end position="407"/>
    </location>
</feature>
<feature type="topological domain" description="Cytoplasmic" evidence="2">
    <location>
        <begin position="408"/>
        <end position="524"/>
    </location>
</feature>
<feature type="region of interest" description="Disordered" evidence="5">
    <location>
        <begin position="413"/>
        <end position="435"/>
    </location>
</feature>
<feature type="region of interest" description="Disordered" evidence="5">
    <location>
        <begin position="485"/>
        <end position="524"/>
    </location>
</feature>
<feature type="short sequence motif" description="PY-motif; mediates interaction with NEDD4L" evidence="1">
    <location>
        <begin position="498"/>
        <end position="501"/>
    </location>
</feature>
<feature type="compositionally biased region" description="Polar residues" evidence="5">
    <location>
        <begin position="501"/>
        <end position="524"/>
    </location>
</feature>
<feature type="binding site" evidence="8 14">
    <location>
        <position position="110"/>
    </location>
    <ligand>
        <name>Ca(2+)</name>
        <dbReference type="ChEBI" id="CHEBI:29108"/>
    </ligand>
</feature>
<feature type="binding site" evidence="8 14">
    <location>
        <position position="113"/>
    </location>
    <ligand>
        <name>Ca(2+)</name>
        <dbReference type="ChEBI" id="CHEBI:29108"/>
    </ligand>
</feature>
<feature type="site" description="Essential for the formation of the channel-pore" evidence="3">
    <location>
        <position position="161"/>
    </location>
</feature>
<feature type="modified residue" description="Phosphoserine" evidence="15">
    <location>
        <position position="496"/>
    </location>
</feature>
<feature type="modified residue" description="Phosphoserine" evidence="15">
    <location>
        <position position="504"/>
    </location>
</feature>
<feature type="modified residue" description="Phosphoserine" evidence="15">
    <location>
        <position position="522"/>
    </location>
</feature>
<feature type="glycosylation site" description="N-linked (GlcNAc...) asparagine" evidence="8">
    <location>
        <position position="126"/>
    </location>
</feature>
<feature type="glycosylation site" description="N-linked (GlcNAc...) asparagine" evidence="8">
    <location>
        <position position="144"/>
    </location>
</feature>
<feature type="glycosylation site" description="N-linked (GlcNAc...) asparagine" evidence="8">
    <location>
        <position position="351"/>
    </location>
</feature>
<feature type="disulfide bond" evidence="2">
    <location>
        <begin position="271"/>
        <end position="381"/>
    </location>
</feature>
<feature type="disulfide bond" evidence="9">
    <location>
        <begin position="299"/>
        <end position="366"/>
    </location>
</feature>
<feature type="splice variant" id="VSP_029771" description="In isoform 2." evidence="10">
    <original>MSQNA</original>
    <variation>ITPPA</variation>
    <location>
        <begin position="475"/>
        <end position="479"/>
    </location>
</feature>
<feature type="splice variant" id="VSP_029772" description="In isoform 2." evidence="10">
    <location>
        <begin position="480"/>
        <end position="524"/>
    </location>
</feature>
<feature type="mutagenesis site" description="Impairs homotetramerization." evidence="9">
    <original>C</original>
    <variation>A</variation>
    <location>
        <position position="299"/>
    </location>
</feature>
<feature type="mutagenesis site" description="Impairs homotetramerization." evidence="9">
    <original>C</original>
    <variation>A</variation>
    <location>
        <position position="366"/>
    </location>
</feature>
<feature type="sequence conflict" description="In Ref. 1; BAC34944." evidence="12" ref="1">
    <original>F</original>
    <variation>L</variation>
    <location>
        <position position="60"/>
    </location>
</feature>
<feature type="helix" evidence="16">
    <location>
        <begin position="10"/>
        <end position="16"/>
    </location>
</feature>
<feature type="helix" evidence="16">
    <location>
        <begin position="37"/>
        <end position="40"/>
    </location>
</feature>
<feature type="helix" evidence="16">
    <location>
        <begin position="42"/>
        <end position="47"/>
    </location>
</feature>
<feature type="helix" evidence="16">
    <location>
        <begin position="49"/>
        <end position="62"/>
    </location>
</feature>
<feature type="helix" evidence="16">
    <location>
        <begin position="88"/>
        <end position="146"/>
    </location>
</feature>
<feature type="helix" evidence="16">
    <location>
        <begin position="149"/>
        <end position="151"/>
    </location>
</feature>
<feature type="strand" evidence="16">
    <location>
        <begin position="156"/>
        <end position="158"/>
    </location>
</feature>
<feature type="helix" evidence="16">
    <location>
        <begin position="162"/>
        <end position="182"/>
    </location>
</feature>
<feature type="helix" evidence="16">
    <location>
        <begin position="195"/>
        <end position="232"/>
    </location>
</feature>
<feature type="strand" evidence="16">
    <location>
        <begin position="235"/>
        <end position="238"/>
    </location>
</feature>
<feature type="helix" evidence="16">
    <location>
        <begin position="241"/>
        <end position="272"/>
    </location>
</feature>
<feature type="helix" evidence="16">
    <location>
        <begin position="274"/>
        <end position="285"/>
    </location>
</feature>
<feature type="helix" evidence="16">
    <location>
        <begin position="290"/>
        <end position="296"/>
    </location>
</feature>
<feature type="helix" evidence="16">
    <location>
        <begin position="307"/>
        <end position="328"/>
    </location>
</feature>
<feature type="helix" evidence="16">
    <location>
        <begin position="332"/>
        <end position="335"/>
    </location>
</feature>
<feature type="helix" evidence="16">
    <location>
        <begin position="340"/>
        <end position="363"/>
    </location>
</feature>
<feature type="helix" evidence="16">
    <location>
        <begin position="366"/>
        <end position="408"/>
    </location>
</feature>
<proteinExistence type="evidence at protein level"/>
<reference key="1">
    <citation type="journal article" date="2005" name="Science">
        <title>The transcriptional landscape of the mammalian genome.</title>
        <authorList>
            <person name="Carninci P."/>
            <person name="Kasukawa T."/>
            <person name="Katayama S."/>
            <person name="Gough J."/>
            <person name="Frith M.C."/>
            <person name="Maeda N."/>
            <person name="Oyama R."/>
            <person name="Ravasi T."/>
            <person name="Lenhard B."/>
            <person name="Wells C."/>
            <person name="Kodzius R."/>
            <person name="Shimokawa K."/>
            <person name="Bajic V.B."/>
            <person name="Brenner S.E."/>
            <person name="Batalov S."/>
            <person name="Forrest A.R."/>
            <person name="Zavolan M."/>
            <person name="Davis M.J."/>
            <person name="Wilming L.G."/>
            <person name="Aidinis V."/>
            <person name="Allen J.E."/>
            <person name="Ambesi-Impiombato A."/>
            <person name="Apweiler R."/>
            <person name="Aturaliya R.N."/>
            <person name="Bailey T.L."/>
            <person name="Bansal M."/>
            <person name="Baxter L."/>
            <person name="Beisel K.W."/>
            <person name="Bersano T."/>
            <person name="Bono H."/>
            <person name="Chalk A.M."/>
            <person name="Chiu K.P."/>
            <person name="Choudhary V."/>
            <person name="Christoffels A."/>
            <person name="Clutterbuck D.R."/>
            <person name="Crowe M.L."/>
            <person name="Dalla E."/>
            <person name="Dalrymple B.P."/>
            <person name="de Bono B."/>
            <person name="Della Gatta G."/>
            <person name="di Bernardo D."/>
            <person name="Down T."/>
            <person name="Engstrom P."/>
            <person name="Fagiolini M."/>
            <person name="Faulkner G."/>
            <person name="Fletcher C.F."/>
            <person name="Fukushima T."/>
            <person name="Furuno M."/>
            <person name="Futaki S."/>
            <person name="Gariboldi M."/>
            <person name="Georgii-Hemming P."/>
            <person name="Gingeras T.R."/>
            <person name="Gojobori T."/>
            <person name="Green R.E."/>
            <person name="Gustincich S."/>
            <person name="Harbers M."/>
            <person name="Hayashi Y."/>
            <person name="Hensch T.K."/>
            <person name="Hirokawa N."/>
            <person name="Hill D."/>
            <person name="Huminiecki L."/>
            <person name="Iacono M."/>
            <person name="Ikeo K."/>
            <person name="Iwama A."/>
            <person name="Ishikawa T."/>
            <person name="Jakt M."/>
            <person name="Kanapin A."/>
            <person name="Katoh M."/>
            <person name="Kawasawa Y."/>
            <person name="Kelso J."/>
            <person name="Kitamura H."/>
            <person name="Kitano H."/>
            <person name="Kollias G."/>
            <person name="Krishnan S.P."/>
            <person name="Kruger A."/>
            <person name="Kummerfeld S.K."/>
            <person name="Kurochkin I.V."/>
            <person name="Lareau L.F."/>
            <person name="Lazarevic D."/>
            <person name="Lipovich L."/>
            <person name="Liu J."/>
            <person name="Liuni S."/>
            <person name="McWilliam S."/>
            <person name="Madan Babu M."/>
            <person name="Madera M."/>
            <person name="Marchionni L."/>
            <person name="Matsuda H."/>
            <person name="Matsuzawa S."/>
            <person name="Miki H."/>
            <person name="Mignone F."/>
            <person name="Miyake S."/>
            <person name="Morris K."/>
            <person name="Mottagui-Tabar S."/>
            <person name="Mulder N."/>
            <person name="Nakano N."/>
            <person name="Nakauchi H."/>
            <person name="Ng P."/>
            <person name="Nilsson R."/>
            <person name="Nishiguchi S."/>
            <person name="Nishikawa S."/>
            <person name="Nori F."/>
            <person name="Ohara O."/>
            <person name="Okazaki Y."/>
            <person name="Orlando V."/>
            <person name="Pang K.C."/>
            <person name="Pavan W.J."/>
            <person name="Pavesi G."/>
            <person name="Pesole G."/>
            <person name="Petrovsky N."/>
            <person name="Piazza S."/>
            <person name="Reed J."/>
            <person name="Reid J.F."/>
            <person name="Ring B.Z."/>
            <person name="Ringwald M."/>
            <person name="Rost B."/>
            <person name="Ruan Y."/>
            <person name="Salzberg S.L."/>
            <person name="Sandelin A."/>
            <person name="Schneider C."/>
            <person name="Schoenbach C."/>
            <person name="Sekiguchi K."/>
            <person name="Semple C.A."/>
            <person name="Seno S."/>
            <person name="Sessa L."/>
            <person name="Sheng Y."/>
            <person name="Shibata Y."/>
            <person name="Shimada H."/>
            <person name="Shimada K."/>
            <person name="Silva D."/>
            <person name="Sinclair B."/>
            <person name="Sperling S."/>
            <person name="Stupka E."/>
            <person name="Sugiura K."/>
            <person name="Sultana R."/>
            <person name="Takenaka Y."/>
            <person name="Taki K."/>
            <person name="Tammoja K."/>
            <person name="Tan S.L."/>
            <person name="Tang S."/>
            <person name="Taylor M.S."/>
            <person name="Tegner J."/>
            <person name="Teichmann S.A."/>
            <person name="Ueda H.R."/>
            <person name="van Nimwegen E."/>
            <person name="Verardo R."/>
            <person name="Wei C.L."/>
            <person name="Yagi K."/>
            <person name="Yamanishi H."/>
            <person name="Zabarovsky E."/>
            <person name="Zhu S."/>
            <person name="Zimmer A."/>
            <person name="Hide W."/>
            <person name="Bult C."/>
            <person name="Grimmond S.M."/>
            <person name="Teasdale R.D."/>
            <person name="Liu E.T."/>
            <person name="Brusic V."/>
            <person name="Quackenbush J."/>
            <person name="Wahlestedt C."/>
            <person name="Mattick J.S."/>
            <person name="Hume D.A."/>
            <person name="Kai C."/>
            <person name="Sasaki D."/>
            <person name="Tomaru Y."/>
            <person name="Fukuda S."/>
            <person name="Kanamori-Katayama M."/>
            <person name="Suzuki M."/>
            <person name="Aoki J."/>
            <person name="Arakawa T."/>
            <person name="Iida J."/>
            <person name="Imamura K."/>
            <person name="Itoh M."/>
            <person name="Kato T."/>
            <person name="Kawaji H."/>
            <person name="Kawagashira N."/>
            <person name="Kawashima T."/>
            <person name="Kojima M."/>
            <person name="Kondo S."/>
            <person name="Konno H."/>
            <person name="Nakano K."/>
            <person name="Ninomiya N."/>
            <person name="Nishio T."/>
            <person name="Okada M."/>
            <person name="Plessy C."/>
            <person name="Shibata K."/>
            <person name="Shiraki T."/>
            <person name="Suzuki S."/>
            <person name="Tagami M."/>
            <person name="Waki K."/>
            <person name="Watahiki A."/>
            <person name="Okamura-Oho Y."/>
            <person name="Suzuki H."/>
            <person name="Kawai J."/>
            <person name="Hayashizaki Y."/>
        </authorList>
    </citation>
    <scope>NUCLEOTIDE SEQUENCE [LARGE SCALE MRNA] (ISOFORM 1)</scope>
    <source>
        <strain>C57BL/6J</strain>
        <tissue>Heart</tissue>
    </source>
</reference>
<reference key="2">
    <citation type="journal article" date="2004" name="Genome Res.">
        <title>The status, quality, and expansion of the NIH full-length cDNA project: the Mammalian Gene Collection (MGC).</title>
        <authorList>
            <consortium name="The MGC Project Team"/>
        </authorList>
    </citation>
    <scope>NUCLEOTIDE SEQUENCE [LARGE SCALE MRNA] (ISOFORMS 1 AND 2)</scope>
    <source>
        <strain>C57BL/6J</strain>
        <tissue>Brain</tissue>
    </source>
</reference>
<reference key="3">
    <citation type="journal article" date="2004" name="DNA Res.">
        <title>Prediction of the coding sequences of mouse homologues of KIAA gene: IV. The complete nucleotide sequences of 500 mouse KIAA-homologous cDNAs identified by screening of terminal sequences of cDNA clones randomly sampled from size-fractionated libraries.</title>
        <authorList>
            <person name="Okazaki N."/>
            <person name="Kikuno R."/>
            <person name="Ohara R."/>
            <person name="Inamoto S."/>
            <person name="Koseki H."/>
            <person name="Hiraoka S."/>
            <person name="Saga Y."/>
            <person name="Seino S."/>
            <person name="Nishimura M."/>
            <person name="Kaisho T."/>
            <person name="Hoshino K."/>
            <person name="Kitamura H."/>
            <person name="Nagase T."/>
            <person name="Ohara O."/>
            <person name="Koga H."/>
        </authorList>
    </citation>
    <scope>NUCLEOTIDE SEQUENCE [LARGE SCALE MRNA] OF 139-524 (ISOFORM 1)</scope>
</reference>
<reference key="4">
    <citation type="journal article" date="2004" name="J. Biol. Chem.">
        <title>A novel human Cl(-) channel family related to Drosophila flightless locus.</title>
        <authorList>
            <person name="Suzuki M."/>
            <person name="Mizuno A."/>
        </authorList>
    </citation>
    <scope>TISSUE SPECIFICITY</scope>
</reference>
<reference key="5">
    <citation type="journal article" date="2009" name="Immunity">
        <title>The phagosomal proteome in interferon-gamma-activated macrophages.</title>
        <authorList>
            <person name="Trost M."/>
            <person name="English L."/>
            <person name="Lemieux S."/>
            <person name="Courcelles M."/>
            <person name="Desjardins M."/>
            <person name="Thibault P."/>
        </authorList>
    </citation>
    <scope>IDENTIFICATION BY MASS SPECTROMETRY [LARGE SCALE ANALYSIS]</scope>
</reference>
<reference key="6">
    <citation type="journal article" date="2010" name="Cell">
        <title>A tissue-specific atlas of mouse protein phosphorylation and expression.</title>
        <authorList>
            <person name="Huttlin E.L."/>
            <person name="Jedrychowski M.P."/>
            <person name="Elias J.E."/>
            <person name="Goswami T."/>
            <person name="Rad R."/>
            <person name="Beausoleil S.A."/>
            <person name="Villen J."/>
            <person name="Haas W."/>
            <person name="Sowa M.E."/>
            <person name="Gygi S.P."/>
        </authorList>
    </citation>
    <scope>PHOSPHORYLATION [LARGE SCALE ANALYSIS] AT SER-496; SER-504 AND SER-522</scope>
    <scope>IDENTIFICATION BY MASS SPECTROMETRY [LARGE SCALE ANALYSIS]</scope>
    <source>
        <tissue>Brain</tissue>
        <tissue>Kidney</tissue>
        <tissue>Lung</tissue>
        <tissue>Spleen</tissue>
    </source>
</reference>
<reference key="7">
    <citation type="journal article" date="2019" name="Exp. Neurobiol.">
        <title>Tweety-homolog (Ttyh) Family Encodes the Pore-forming Subunits of the Swelling-dependent Volume-regulated Anion Channel (VRACswell) in the Brain.</title>
        <authorList>
            <person name="Han Y.E."/>
            <person name="Kwon J."/>
            <person name="Won J."/>
            <person name="An H."/>
            <person name="Jang M.W."/>
            <person name="Woo J."/>
            <person name="Lee J.S."/>
            <person name="Park M.G."/>
            <person name="Yoon B.E."/>
            <person name="Lee S.E."/>
            <person name="Hwang E.M."/>
            <person name="Jung J.Y."/>
            <person name="Park H."/>
            <person name="Oh S.J."/>
            <person name="Lee C.J."/>
        </authorList>
    </citation>
    <scope>FUNCTION</scope>
    <scope>TRANSPORTER ACTIVITY</scope>
    <scope>ACTIVITY REGULATION</scope>
</reference>
<reference key="8">
    <citation type="journal article" date="2022" name="Commun. Biol.">
        <title>TTYH family members form tetrameric complexes at the cell membrane.</title>
        <authorList>
            <person name="Melvin E."/>
            <person name="Kalaninova Z."/>
            <person name="Shlush E."/>
            <person name="Man P."/>
            <person name="Giladi M."/>
            <person name="Haitin Y."/>
        </authorList>
    </citation>
    <scope>SUBUNIT</scope>
    <scope>SUBCELLULAR LOCATION</scope>
    <scope>DISULFIDE BOND</scope>
    <scope>MUTAGENESIS OF CYS-299 AND CYS-366</scope>
    <scope>GLYCOSYLATION</scope>
</reference>
<reference evidence="14" key="9">
    <citation type="journal article" date="2021" name="Nat. Commun.">
        <title>Structures of tweety homolog proteins TTYH2 and TTYH3 reveal a Ca2+-dependent switch from intra- to intermembrane dimerization.</title>
        <authorList>
            <person name="Li B."/>
            <person name="Hoel C.M."/>
            <person name="Brohawn S.G."/>
        </authorList>
    </citation>
    <scope>STRUCTURE BY ELECTRON MICROSCOPY (3.23 ANGSTROMS) OF 2-524</scope>
    <scope>SUBUNIT</scope>
    <scope>CALCIUM-BINDING</scope>
    <scope>GLYCOSYLATION AT ASN-126; ASN-144 AND ASN-351</scope>
</reference>
<name>TTYH3_MOUSE</name>
<evidence type="ECO:0000250" key="1">
    <source>
        <dbReference type="UniProtKB" id="Q9BSA4"/>
    </source>
</evidence>
<evidence type="ECO:0000250" key="2">
    <source>
        <dbReference type="UniProtKB" id="Q9C0H2"/>
    </source>
</evidence>
<evidence type="ECO:0000250" key="3">
    <source>
        <dbReference type="UniProtKB" id="Q9D3A9"/>
    </source>
</evidence>
<evidence type="ECO:0000255" key="4"/>
<evidence type="ECO:0000256" key="5">
    <source>
        <dbReference type="SAM" id="MobiDB-lite"/>
    </source>
</evidence>
<evidence type="ECO:0000269" key="6">
    <source>
    </source>
</evidence>
<evidence type="ECO:0000269" key="7">
    <source>
    </source>
</evidence>
<evidence type="ECO:0000269" key="8">
    <source>
    </source>
</evidence>
<evidence type="ECO:0000269" key="9">
    <source>
    </source>
</evidence>
<evidence type="ECO:0000303" key="10">
    <source>
    </source>
</evidence>
<evidence type="ECO:0000303" key="11">
    <source>
    </source>
</evidence>
<evidence type="ECO:0000305" key="12"/>
<evidence type="ECO:0000305" key="13">
    <source>
    </source>
</evidence>
<evidence type="ECO:0007744" key="14">
    <source>
        <dbReference type="PDB" id="7RTW"/>
    </source>
</evidence>
<evidence type="ECO:0007744" key="15">
    <source>
    </source>
</evidence>
<evidence type="ECO:0007829" key="16">
    <source>
        <dbReference type="PDB" id="7RTW"/>
    </source>
</evidence>
<organism>
    <name type="scientific">Mus musculus</name>
    <name type="common">Mouse</name>
    <dbReference type="NCBI Taxonomy" id="10090"/>
    <lineage>
        <taxon>Eukaryota</taxon>
        <taxon>Metazoa</taxon>
        <taxon>Chordata</taxon>
        <taxon>Craniata</taxon>
        <taxon>Vertebrata</taxon>
        <taxon>Euteleostomi</taxon>
        <taxon>Mammalia</taxon>
        <taxon>Eutheria</taxon>
        <taxon>Euarchontoglires</taxon>
        <taxon>Glires</taxon>
        <taxon>Rodentia</taxon>
        <taxon>Myomorpha</taxon>
        <taxon>Muroidea</taxon>
        <taxon>Muridae</taxon>
        <taxon>Murinae</taxon>
        <taxon>Mus</taxon>
        <taxon>Mus</taxon>
    </lineage>
</organism>
<accession>Q6P5F7</accession>
<accession>Q69ZD3</accession>
<accession>Q6PCX0</accession>
<accession>Q8C789</accession>
<keyword id="KW-0002">3D-structure</keyword>
<keyword id="KW-0025">Alternative splicing</keyword>
<keyword id="KW-0106">Calcium</keyword>
<keyword id="KW-1003">Cell membrane</keyword>
<keyword id="KW-0868">Chloride</keyword>
<keyword id="KW-0869">Chloride channel</keyword>
<keyword id="KW-1015">Disulfide bond</keyword>
<keyword id="KW-0325">Glycoprotein</keyword>
<keyword id="KW-0407">Ion channel</keyword>
<keyword id="KW-0406">Ion transport</keyword>
<keyword id="KW-0472">Membrane</keyword>
<keyword id="KW-0597">Phosphoprotein</keyword>
<keyword id="KW-1185">Reference proteome</keyword>
<keyword id="KW-0812">Transmembrane</keyword>
<keyword id="KW-1133">Transmembrane helix</keyword>
<keyword id="KW-0813">Transport</keyword>
<keyword id="KW-0832">Ubl conjugation</keyword>
<protein>
    <recommendedName>
        <fullName>Protein tweety homolog 3</fullName>
        <shortName>mTTY3</shortName>
    </recommendedName>
    <alternativeName>
        <fullName evidence="11">Volume-regulated anion channel subunit Ttyh3</fullName>
    </alternativeName>
</protein>
<dbReference type="EMBL" id="AK052340">
    <property type="protein sequence ID" value="BAC34944.1"/>
    <property type="molecule type" value="mRNA"/>
</dbReference>
<dbReference type="EMBL" id="BC059083">
    <property type="protein sequence ID" value="AAH59083.1"/>
    <property type="status" value="ALT_SEQ"/>
    <property type="molecule type" value="mRNA"/>
</dbReference>
<dbReference type="EMBL" id="BC062917">
    <property type="protein sequence ID" value="AAH62917.1"/>
    <property type="molecule type" value="mRNA"/>
</dbReference>
<dbReference type="EMBL" id="AK173233">
    <property type="protein sequence ID" value="BAD32511.1"/>
    <property type="molecule type" value="mRNA"/>
</dbReference>
<dbReference type="CCDS" id="CCDS19822.1">
    <molecule id="Q6P5F7-1"/>
</dbReference>
<dbReference type="CCDS" id="CCDS80450.1">
    <molecule id="Q6P5F7-2"/>
</dbReference>
<dbReference type="RefSeq" id="NP_001294969.1">
    <molecule id="Q6P5F7-2"/>
    <property type="nucleotide sequence ID" value="NM_001308040.1"/>
</dbReference>
<dbReference type="RefSeq" id="NP_780483.2">
    <molecule id="Q6P5F7-1"/>
    <property type="nucleotide sequence ID" value="NM_175274.5"/>
</dbReference>
<dbReference type="PDB" id="7RTW">
    <property type="method" value="EM"/>
    <property type="resolution" value="3.23 A"/>
    <property type="chains" value="A/B=2-524"/>
</dbReference>
<dbReference type="PDBsum" id="7RTW"/>
<dbReference type="EMDB" id="EMD-24691"/>
<dbReference type="SMR" id="Q6P5F7"/>
<dbReference type="BioGRID" id="219339">
    <property type="interactions" value="2"/>
</dbReference>
<dbReference type="FunCoup" id="Q6P5F7">
    <property type="interactions" value="1534"/>
</dbReference>
<dbReference type="STRING" id="10090.ENSMUSP00000037447"/>
<dbReference type="GlyConnect" id="2646">
    <property type="glycosylation" value="2 N-Linked glycans (2 sites)"/>
</dbReference>
<dbReference type="GlyCosmos" id="Q6P5F7">
    <property type="glycosylation" value="3 sites, 2 glycans"/>
</dbReference>
<dbReference type="GlyGen" id="Q6P5F7">
    <property type="glycosylation" value="4 sites, 5 N-linked glycans (3 sites), 1 O-linked glycan (1 site)"/>
</dbReference>
<dbReference type="iPTMnet" id="Q6P5F7"/>
<dbReference type="PhosphoSitePlus" id="Q6P5F7"/>
<dbReference type="SwissPalm" id="Q6P5F7"/>
<dbReference type="PaxDb" id="10090-ENSMUSP00000037447"/>
<dbReference type="PeptideAtlas" id="Q6P5F7"/>
<dbReference type="ProteomicsDB" id="300058">
    <molecule id="Q6P5F7-1"/>
</dbReference>
<dbReference type="ProteomicsDB" id="300059">
    <molecule id="Q6P5F7-2"/>
</dbReference>
<dbReference type="Pumba" id="Q6P5F7"/>
<dbReference type="Antibodypedia" id="43641">
    <property type="antibodies" value="26 antibodies from 10 providers"/>
</dbReference>
<dbReference type="DNASU" id="78339"/>
<dbReference type="Ensembl" id="ENSMUST00000042661.8">
    <molecule id="Q6P5F7-1"/>
    <property type="protein sequence ID" value="ENSMUSP00000037447.4"/>
    <property type="gene ID" value="ENSMUSG00000036565.8"/>
</dbReference>
<dbReference type="Ensembl" id="ENSMUST00000197452.5">
    <molecule id="Q6P5F7-2"/>
    <property type="protein sequence ID" value="ENSMUSP00000142655.2"/>
    <property type="gene ID" value="ENSMUSG00000036565.8"/>
</dbReference>
<dbReference type="GeneID" id="78339"/>
<dbReference type="KEGG" id="mmu:78339"/>
<dbReference type="UCSC" id="uc009ahw.2">
    <molecule id="Q6P5F7-1"/>
    <property type="organism name" value="mouse"/>
</dbReference>
<dbReference type="UCSC" id="uc012egc.1">
    <molecule id="Q6P5F7-2"/>
    <property type="organism name" value="mouse"/>
</dbReference>
<dbReference type="AGR" id="MGI:1925589"/>
<dbReference type="CTD" id="80727"/>
<dbReference type="MGI" id="MGI:1925589">
    <property type="gene designation" value="Ttyh3"/>
</dbReference>
<dbReference type="VEuPathDB" id="HostDB:ENSMUSG00000036565"/>
<dbReference type="eggNOG" id="KOG4433">
    <property type="taxonomic scope" value="Eukaryota"/>
</dbReference>
<dbReference type="GeneTree" id="ENSGT00950000183060"/>
<dbReference type="HOGENOM" id="CLU_023758_0_1_1"/>
<dbReference type="InParanoid" id="Q6P5F7"/>
<dbReference type="OMA" id="HTWQHKR"/>
<dbReference type="OrthoDB" id="187568at2759"/>
<dbReference type="PhylomeDB" id="Q6P5F7"/>
<dbReference type="TreeFam" id="TF319025"/>
<dbReference type="Reactome" id="R-MMU-2672351">
    <property type="pathway name" value="Stimuli-sensing channels"/>
</dbReference>
<dbReference type="BioGRID-ORCS" id="78339">
    <property type="hits" value="1 hit in 80 CRISPR screens"/>
</dbReference>
<dbReference type="ChiTaRS" id="Ttyh3">
    <property type="organism name" value="mouse"/>
</dbReference>
<dbReference type="PRO" id="PR:Q6P5F7"/>
<dbReference type="Proteomes" id="UP000000589">
    <property type="component" value="Chromosome 5"/>
</dbReference>
<dbReference type="RNAct" id="Q6P5F7">
    <property type="molecule type" value="protein"/>
</dbReference>
<dbReference type="Bgee" id="ENSMUSG00000036565">
    <property type="expression patterns" value="Expressed in ventricular zone and 216 other cell types or tissues"/>
</dbReference>
<dbReference type="ExpressionAtlas" id="Q6P5F7">
    <property type="expression patterns" value="baseline and differential"/>
</dbReference>
<dbReference type="GO" id="GO:0034707">
    <property type="term" value="C:chloride channel complex"/>
    <property type="evidence" value="ECO:0007669"/>
    <property type="project" value="UniProtKB-KW"/>
</dbReference>
<dbReference type="GO" id="GO:0016020">
    <property type="term" value="C:membrane"/>
    <property type="evidence" value="ECO:0000266"/>
    <property type="project" value="MGI"/>
</dbReference>
<dbReference type="GO" id="GO:0005886">
    <property type="term" value="C:plasma membrane"/>
    <property type="evidence" value="ECO:0000314"/>
    <property type="project" value="UniProtKB"/>
</dbReference>
<dbReference type="GO" id="GO:0005509">
    <property type="term" value="F:calcium ion binding"/>
    <property type="evidence" value="ECO:0000314"/>
    <property type="project" value="UniProtKB"/>
</dbReference>
<dbReference type="GO" id="GO:0005254">
    <property type="term" value="F:chloride channel activity"/>
    <property type="evidence" value="ECO:0000266"/>
    <property type="project" value="MGI"/>
</dbReference>
<dbReference type="GO" id="GO:0005229">
    <property type="term" value="F:intracellularly calcium-gated chloride channel activity"/>
    <property type="evidence" value="ECO:0007669"/>
    <property type="project" value="Ensembl"/>
</dbReference>
<dbReference type="GO" id="GO:0072320">
    <property type="term" value="F:volume-sensitive chloride channel activity"/>
    <property type="evidence" value="ECO:0000314"/>
    <property type="project" value="UniProtKB"/>
</dbReference>
<dbReference type="GO" id="GO:0015813">
    <property type="term" value="P:L-glutamate transmembrane transport"/>
    <property type="evidence" value="ECO:0000314"/>
    <property type="project" value="UniProtKB"/>
</dbReference>
<dbReference type="CDD" id="cd07912">
    <property type="entry name" value="Tweety_N"/>
    <property type="match status" value="1"/>
</dbReference>
<dbReference type="InterPro" id="IPR006990">
    <property type="entry name" value="Tweety"/>
</dbReference>
<dbReference type="PANTHER" id="PTHR12424:SF4">
    <property type="entry name" value="PROTEIN TWEETY HOMOLOG 3"/>
    <property type="match status" value="1"/>
</dbReference>
<dbReference type="PANTHER" id="PTHR12424">
    <property type="entry name" value="TWEETY-RELATED"/>
    <property type="match status" value="1"/>
</dbReference>
<dbReference type="Pfam" id="PF04906">
    <property type="entry name" value="Tweety"/>
    <property type="match status" value="1"/>
</dbReference>